<dbReference type="EC" id="6.3.4.4" evidence="2"/>
<dbReference type="EMBL" id="BC080025">
    <property type="protein sequence ID" value="AAH80025.1"/>
    <property type="molecule type" value="mRNA"/>
</dbReference>
<dbReference type="RefSeq" id="NP_001087505.1">
    <property type="nucleotide sequence ID" value="NM_001094036.1"/>
</dbReference>
<dbReference type="SMR" id="Q68F20"/>
<dbReference type="DNASU" id="447329"/>
<dbReference type="GeneID" id="447329"/>
<dbReference type="KEGG" id="xla:447329"/>
<dbReference type="AGR" id="Xenbase:XB-GENE-6254009"/>
<dbReference type="CTD" id="447329"/>
<dbReference type="Xenbase" id="XB-GENE-6254009">
    <property type="gene designation" value="adss1.S"/>
</dbReference>
<dbReference type="OMA" id="IINARTW"/>
<dbReference type="OrthoDB" id="10265645at2759"/>
<dbReference type="UniPathway" id="UPA00075">
    <property type="reaction ID" value="UER00335"/>
</dbReference>
<dbReference type="Proteomes" id="UP000186698">
    <property type="component" value="Chromosome 8S"/>
</dbReference>
<dbReference type="Bgee" id="447329">
    <property type="expression patterns" value="Expressed in muscle tissue and 17 other cell types or tissues"/>
</dbReference>
<dbReference type="GO" id="GO:0005737">
    <property type="term" value="C:cytoplasm"/>
    <property type="evidence" value="ECO:0000318"/>
    <property type="project" value="GO_Central"/>
</dbReference>
<dbReference type="GO" id="GO:0004019">
    <property type="term" value="F:adenylosuccinate synthase activity"/>
    <property type="evidence" value="ECO:0000250"/>
    <property type="project" value="UniProtKB"/>
</dbReference>
<dbReference type="GO" id="GO:0005525">
    <property type="term" value="F:GTP binding"/>
    <property type="evidence" value="ECO:0007669"/>
    <property type="project" value="UniProtKB-UniRule"/>
</dbReference>
<dbReference type="GO" id="GO:0000287">
    <property type="term" value="F:magnesium ion binding"/>
    <property type="evidence" value="ECO:0007669"/>
    <property type="project" value="UniProtKB-UniRule"/>
</dbReference>
<dbReference type="GO" id="GO:0044208">
    <property type="term" value="P:'de novo' AMP biosynthetic process"/>
    <property type="evidence" value="ECO:0000318"/>
    <property type="project" value="GO_Central"/>
</dbReference>
<dbReference type="GO" id="GO:0046040">
    <property type="term" value="P:IMP metabolic process"/>
    <property type="evidence" value="ECO:0000318"/>
    <property type="project" value="GO_Central"/>
</dbReference>
<dbReference type="CDD" id="cd03108">
    <property type="entry name" value="AdSS"/>
    <property type="match status" value="1"/>
</dbReference>
<dbReference type="FunFam" id="3.90.170.10:FF:000001">
    <property type="entry name" value="Adenylosuccinate synthetase"/>
    <property type="match status" value="1"/>
</dbReference>
<dbReference type="FunFam" id="1.10.300.10:FF:000002">
    <property type="entry name" value="Adenylosuccinate synthetase, chloroplastic"/>
    <property type="match status" value="1"/>
</dbReference>
<dbReference type="Gene3D" id="3.40.440.10">
    <property type="entry name" value="Adenylosuccinate Synthetase, subunit A, domain 1"/>
    <property type="match status" value="1"/>
</dbReference>
<dbReference type="Gene3D" id="1.10.300.10">
    <property type="entry name" value="Adenylosuccinate Synthetase, subunit A, domain 2"/>
    <property type="match status" value="1"/>
</dbReference>
<dbReference type="Gene3D" id="3.90.170.10">
    <property type="entry name" value="Adenylosuccinate Synthetase, subunit A, domain 3"/>
    <property type="match status" value="1"/>
</dbReference>
<dbReference type="HAMAP" id="MF_00011">
    <property type="entry name" value="Adenylosucc_synth"/>
    <property type="match status" value="1"/>
</dbReference>
<dbReference type="HAMAP" id="MF_03126">
    <property type="entry name" value="Adenylosucc_synth_vert_basic"/>
    <property type="match status" value="1"/>
</dbReference>
<dbReference type="InterPro" id="IPR018220">
    <property type="entry name" value="Adenylosuccin_syn_GTP-bd"/>
</dbReference>
<dbReference type="InterPro" id="IPR033128">
    <property type="entry name" value="Adenylosuccin_syn_Lys_AS"/>
</dbReference>
<dbReference type="InterPro" id="IPR042109">
    <property type="entry name" value="Adenylosuccinate_synth_dom1"/>
</dbReference>
<dbReference type="InterPro" id="IPR042110">
    <property type="entry name" value="Adenylosuccinate_synth_dom2"/>
</dbReference>
<dbReference type="InterPro" id="IPR042111">
    <property type="entry name" value="Adenylosuccinate_synth_dom3"/>
</dbReference>
<dbReference type="InterPro" id="IPR001114">
    <property type="entry name" value="Adenylosuccinate_synthetase"/>
</dbReference>
<dbReference type="InterPro" id="IPR027509">
    <property type="entry name" value="AdSS_1_vert"/>
</dbReference>
<dbReference type="InterPro" id="IPR027417">
    <property type="entry name" value="P-loop_NTPase"/>
</dbReference>
<dbReference type="NCBIfam" id="NF002223">
    <property type="entry name" value="PRK01117.1"/>
    <property type="match status" value="1"/>
</dbReference>
<dbReference type="NCBIfam" id="TIGR00184">
    <property type="entry name" value="purA"/>
    <property type="match status" value="1"/>
</dbReference>
<dbReference type="PANTHER" id="PTHR11846">
    <property type="entry name" value="ADENYLOSUCCINATE SYNTHETASE"/>
    <property type="match status" value="1"/>
</dbReference>
<dbReference type="PANTHER" id="PTHR11846:SF2">
    <property type="entry name" value="ADENYLOSUCCINATE SYNTHETASE ISOZYME 1"/>
    <property type="match status" value="1"/>
</dbReference>
<dbReference type="Pfam" id="PF00709">
    <property type="entry name" value="Adenylsucc_synt"/>
    <property type="match status" value="1"/>
</dbReference>
<dbReference type="SMART" id="SM00788">
    <property type="entry name" value="Adenylsucc_synt"/>
    <property type="match status" value="1"/>
</dbReference>
<dbReference type="SUPFAM" id="SSF52540">
    <property type="entry name" value="P-loop containing nucleoside triphosphate hydrolases"/>
    <property type="match status" value="1"/>
</dbReference>
<dbReference type="PROSITE" id="PS01266">
    <property type="entry name" value="ADENYLOSUCCIN_SYN_1"/>
    <property type="match status" value="1"/>
</dbReference>
<dbReference type="PROSITE" id="PS00513">
    <property type="entry name" value="ADENYLOSUCCIN_SYN_2"/>
    <property type="match status" value="1"/>
</dbReference>
<evidence type="ECO:0000250" key="1">
    <source>
        <dbReference type="UniProtKB" id="Q8N142"/>
    </source>
</evidence>
<evidence type="ECO:0000255" key="2">
    <source>
        <dbReference type="HAMAP-Rule" id="MF_03126"/>
    </source>
</evidence>
<evidence type="ECO:0000256" key="3">
    <source>
        <dbReference type="SAM" id="MobiDB-lite"/>
    </source>
</evidence>
<protein>
    <recommendedName>
        <fullName evidence="2">Adenylosuccinate synthetase isozyme 1 B</fullName>
        <shortName evidence="2">AMPSase 1 B</shortName>
        <shortName evidence="2">AdSS 1 B</shortName>
        <ecNumber evidence="2">6.3.4.4</ecNumber>
    </recommendedName>
    <alternativeName>
        <fullName evidence="2">Adenylosuccinate synthetase, basic isozyme B</fullName>
    </alternativeName>
    <alternativeName>
        <fullName evidence="2">Adenylosuccinate synthetase, muscle isozyme B</fullName>
        <shortName evidence="2">M-type adenylosuccinate synthetase B</shortName>
    </alternativeName>
    <alternativeName>
        <fullName evidence="2">IMP--aspartate ligase 1 B</fullName>
    </alternativeName>
</protein>
<comment type="function">
    <text evidence="1">Component of the purine nucleotide cycle (PNC), which interconverts IMP and AMP to regulate the nucleotide levels in various tissues, and which contributes to glycolysis and ammoniagenesis. Catalyzes the first committed step in the biosynthesis of AMP from IMP.</text>
</comment>
<comment type="catalytic activity">
    <reaction evidence="2">
        <text>IMP + L-aspartate + GTP = N(6)-(1,2-dicarboxyethyl)-AMP + GDP + phosphate + 2 H(+)</text>
        <dbReference type="Rhea" id="RHEA:15753"/>
        <dbReference type="ChEBI" id="CHEBI:15378"/>
        <dbReference type="ChEBI" id="CHEBI:29991"/>
        <dbReference type="ChEBI" id="CHEBI:37565"/>
        <dbReference type="ChEBI" id="CHEBI:43474"/>
        <dbReference type="ChEBI" id="CHEBI:57567"/>
        <dbReference type="ChEBI" id="CHEBI:58053"/>
        <dbReference type="ChEBI" id="CHEBI:58189"/>
        <dbReference type="EC" id="6.3.4.4"/>
    </reaction>
</comment>
<comment type="cofactor">
    <cofactor evidence="2">
        <name>Mg(2+)</name>
        <dbReference type="ChEBI" id="CHEBI:18420"/>
    </cofactor>
    <text evidence="2">Binds 1 Mg(2+) ion per subunit.</text>
</comment>
<comment type="pathway">
    <text evidence="2">Purine metabolism; AMP biosynthesis via de novo pathway; AMP from IMP: step 1/2.</text>
</comment>
<comment type="subunit">
    <text evidence="2">Homodimer.</text>
</comment>
<comment type="subcellular location">
    <subcellularLocation>
        <location evidence="2">Cytoplasm</location>
    </subcellularLocation>
</comment>
<comment type="similarity">
    <text evidence="2">Belongs to the adenylosuccinate synthetase family.</text>
</comment>
<sequence length="454" mass="50210">MSGTRASNDRSSHPGAGGHKRPRYDVGNKVTVVLGAQWGDEGKGKVVDLLAMDSDIICRCQGGNNAGHTVVVEGKEYDFHLFPSGIINPKAISFIGNGVVIHLPGLFEEADKNEKKGLKDWEKRLIISDRAHIVCDFHQAVDGLQEVQRQAQEGKNIGTTKKGIGPTYSSKASRTGLRICDLLSDFDEFSARFKNLAHQYQSMFSNLEVDVDGQLKKLKMYAEKIRPMVRDGVYFMYDALHGSPKKILVEGANAALLDIDFGTYPFVTSSNCTVGGVCTGLGIPPQNVGNVYGVVKAYTTRVGIGAFPTEQINESGTLLQTRGHEWGVTTGRKRRCGWLDLVILRYAHMINGFTALALTKLDILDVLDEIKVGVAYRLNGKRIPYFPANQEILQKIEVEYEVMPGWKSDTTGARKWDDLPTKAQNYIRFVETHIGVPVKWVGVGKSRESMIELF</sequence>
<reference key="1">
    <citation type="submission" date="2004-08" db="EMBL/GenBank/DDBJ databases">
        <authorList>
            <consortium name="NIH - Xenopus Gene Collection (XGC) project"/>
        </authorList>
    </citation>
    <scope>NUCLEOTIDE SEQUENCE [LARGE SCALE MRNA]</scope>
    <source>
        <tissue>Spleen</tissue>
    </source>
</reference>
<proteinExistence type="evidence at transcript level"/>
<keyword id="KW-0963">Cytoplasm</keyword>
<keyword id="KW-0342">GTP-binding</keyword>
<keyword id="KW-0436">Ligase</keyword>
<keyword id="KW-0460">Magnesium</keyword>
<keyword id="KW-0479">Metal-binding</keyword>
<keyword id="KW-0547">Nucleotide-binding</keyword>
<keyword id="KW-0658">Purine biosynthesis</keyword>
<keyword id="KW-1185">Reference proteome</keyword>
<feature type="chain" id="PRO_0000398892" description="Adenylosuccinate synthetase isozyme 1 B">
    <location>
        <begin position="1"/>
        <end position="454"/>
    </location>
</feature>
<feature type="region of interest" description="Disordered" evidence="3">
    <location>
        <begin position="1"/>
        <end position="24"/>
    </location>
</feature>
<feature type="active site" description="Proton acceptor" evidence="2">
    <location>
        <position position="40"/>
    </location>
</feature>
<feature type="active site" description="Proton donor" evidence="2">
    <location>
        <position position="68"/>
    </location>
</feature>
<feature type="binding site" evidence="2">
    <location>
        <begin position="39"/>
        <end position="45"/>
    </location>
    <ligand>
        <name>GTP</name>
        <dbReference type="ChEBI" id="CHEBI:37565"/>
    </ligand>
</feature>
<feature type="binding site" description="in other chain" evidence="2">
    <location>
        <begin position="40"/>
        <end position="43"/>
    </location>
    <ligand>
        <name>IMP</name>
        <dbReference type="ChEBI" id="CHEBI:58053"/>
        <note>ligand shared between dimeric partners</note>
    </ligand>
</feature>
<feature type="binding site" evidence="2">
    <location>
        <position position="40"/>
    </location>
    <ligand>
        <name>Mg(2+)</name>
        <dbReference type="ChEBI" id="CHEBI:18420"/>
    </ligand>
</feature>
<feature type="binding site" evidence="2">
    <location>
        <position position="40"/>
    </location>
    <ligand>
        <name>substrate</name>
    </ligand>
</feature>
<feature type="binding site" description="in other chain" evidence="2">
    <location>
        <begin position="65"/>
        <end position="68"/>
    </location>
    <ligand>
        <name>IMP</name>
        <dbReference type="ChEBI" id="CHEBI:58053"/>
        <note>ligand shared between dimeric partners</note>
    </ligand>
</feature>
<feature type="binding site" evidence="2">
    <location>
        <begin position="67"/>
        <end position="69"/>
    </location>
    <ligand>
        <name>GTP</name>
        <dbReference type="ChEBI" id="CHEBI:37565"/>
    </ligand>
</feature>
<feature type="binding site" evidence="2">
    <location>
        <position position="67"/>
    </location>
    <ligand>
        <name>Mg(2+)</name>
        <dbReference type="ChEBI" id="CHEBI:18420"/>
    </ligand>
</feature>
<feature type="binding site" description="in other chain" evidence="2">
    <location>
        <position position="160"/>
    </location>
    <ligand>
        <name>IMP</name>
        <dbReference type="ChEBI" id="CHEBI:58053"/>
        <note>ligand shared between dimeric partners</note>
    </ligand>
</feature>
<feature type="binding site" evidence="2">
    <location>
        <position position="174"/>
    </location>
    <ligand>
        <name>IMP</name>
        <dbReference type="ChEBI" id="CHEBI:58053"/>
        <note>ligand shared between dimeric partners</note>
    </ligand>
</feature>
<feature type="binding site" description="in other chain" evidence="2">
    <location>
        <position position="253"/>
    </location>
    <ligand>
        <name>IMP</name>
        <dbReference type="ChEBI" id="CHEBI:58053"/>
        <note>ligand shared between dimeric partners</note>
    </ligand>
</feature>
<feature type="binding site" description="in other chain" evidence="2">
    <location>
        <position position="268"/>
    </location>
    <ligand>
        <name>IMP</name>
        <dbReference type="ChEBI" id="CHEBI:58053"/>
        <note>ligand shared between dimeric partners</note>
    </ligand>
</feature>
<feature type="binding site" evidence="2">
    <location>
        <begin position="328"/>
        <end position="334"/>
    </location>
    <ligand>
        <name>substrate</name>
    </ligand>
</feature>
<feature type="binding site" description="in other chain" evidence="2">
    <location>
        <position position="332"/>
    </location>
    <ligand>
        <name>IMP</name>
        <dbReference type="ChEBI" id="CHEBI:58053"/>
        <note>ligand shared between dimeric partners</note>
    </ligand>
</feature>
<feature type="binding site" evidence="2">
    <location>
        <position position="334"/>
    </location>
    <ligand>
        <name>GTP</name>
        <dbReference type="ChEBI" id="CHEBI:37565"/>
    </ligand>
</feature>
<feature type="binding site" evidence="2">
    <location>
        <begin position="360"/>
        <end position="362"/>
    </location>
    <ligand>
        <name>GTP</name>
        <dbReference type="ChEBI" id="CHEBI:37565"/>
    </ligand>
</feature>
<feature type="binding site" evidence="2">
    <location>
        <begin position="442"/>
        <end position="445"/>
    </location>
    <ligand>
        <name>GTP</name>
        <dbReference type="ChEBI" id="CHEBI:37565"/>
    </ligand>
</feature>
<accession>Q68F20</accession>
<organism>
    <name type="scientific">Xenopus laevis</name>
    <name type="common">African clawed frog</name>
    <dbReference type="NCBI Taxonomy" id="8355"/>
    <lineage>
        <taxon>Eukaryota</taxon>
        <taxon>Metazoa</taxon>
        <taxon>Chordata</taxon>
        <taxon>Craniata</taxon>
        <taxon>Vertebrata</taxon>
        <taxon>Euteleostomi</taxon>
        <taxon>Amphibia</taxon>
        <taxon>Batrachia</taxon>
        <taxon>Anura</taxon>
        <taxon>Pipoidea</taxon>
        <taxon>Pipidae</taxon>
        <taxon>Xenopodinae</taxon>
        <taxon>Xenopus</taxon>
        <taxon>Xenopus</taxon>
    </lineage>
</organism>
<gene>
    <name type="primary">adss1-b</name>
    <name type="synonym">adssl1-b</name>
</gene>
<name>PUA1B_XENLA</name>